<accession>Q45461</accession>
<accession>O34670</accession>
<sequence>MHHIVQFLQTNGGELLYKTYEHITISLIAVILGVLVAVPLGVVLTRMKKGAGTIIGIVNIIQTLPSLAILAFFIPLLGVGKVPAIVALFFYSVLPILRNTYTGIRGVNKNLLESGKGIGMTPAEQVRLVELPLAAPVIMAGIRTSTIYLIGWATLASFIGGGGLGDYIFIGLNLYQPEYIIGGAVPVTILAIVIDYVLAVAERKLTPAGMQRLKELS</sequence>
<comment type="function">
    <text evidence="3">Involved in a high affinity multicomponent binding-protein-dependent transport system for choline; probably responsible for the translocation of the substrate across the membrane.</text>
</comment>
<comment type="subcellular location">
    <subcellularLocation>
        <location evidence="1">Cell membrane</location>
        <topology evidence="2">Multi-pass membrane protein</topology>
    </subcellularLocation>
</comment>
<comment type="induction">
    <text evidence="4">Repressed by GbsR.</text>
</comment>
<comment type="similarity">
    <text evidence="5">Belongs to the binding-protein-dependent transport system permease family. CysTW subfamily.</text>
</comment>
<reference key="1">
    <citation type="journal article" date="1995" name="J. Bacteriol.">
        <title>Characterization of a chimeric proU operon in a subtilin-producing mutant of Bacillus subtilis 168.</title>
        <authorList>
            <person name="Lin Y."/>
            <person name="Hansen J.N."/>
        </authorList>
    </citation>
    <scope>NUCLEOTIDE SEQUENCE [GENOMIC DNA]</scope>
    <source>
        <strain>ATCC 6633 / PCI 219 / NRS 231</strain>
    </source>
</reference>
<reference key="2">
    <citation type="journal article" date="1999" name="Mol. Microbiol.">
        <title>Two evolutionarily closely related ABC transporters mediate the uptake of choline for synthesis of the osmoprotectant glycine betaine in Bacillus subtilis.</title>
        <authorList>
            <person name="Kappes R.M."/>
            <person name="Kempf B."/>
            <person name="Kneip S."/>
            <person name="Boch J."/>
            <person name="Gade J."/>
            <person name="Meier-Wagner J."/>
            <person name="Bremer E."/>
        </authorList>
    </citation>
    <scope>NUCLEOTIDE SEQUENCE [GENOMIC DNA]</scope>
    <scope>FUNCTION</scope>
    <source>
        <strain>168 / JH642</strain>
    </source>
</reference>
<reference key="3">
    <citation type="journal article" date="1997" name="Nature">
        <title>The complete genome sequence of the Gram-positive bacterium Bacillus subtilis.</title>
        <authorList>
            <person name="Kunst F."/>
            <person name="Ogasawara N."/>
            <person name="Moszer I."/>
            <person name="Albertini A.M."/>
            <person name="Alloni G."/>
            <person name="Azevedo V."/>
            <person name="Bertero M.G."/>
            <person name="Bessieres P."/>
            <person name="Bolotin A."/>
            <person name="Borchert S."/>
            <person name="Borriss R."/>
            <person name="Boursier L."/>
            <person name="Brans A."/>
            <person name="Braun M."/>
            <person name="Brignell S.C."/>
            <person name="Bron S."/>
            <person name="Brouillet S."/>
            <person name="Bruschi C.V."/>
            <person name="Caldwell B."/>
            <person name="Capuano V."/>
            <person name="Carter N.M."/>
            <person name="Choi S.-K."/>
            <person name="Codani J.-J."/>
            <person name="Connerton I.F."/>
            <person name="Cummings N.J."/>
            <person name="Daniel R.A."/>
            <person name="Denizot F."/>
            <person name="Devine K.M."/>
            <person name="Duesterhoeft A."/>
            <person name="Ehrlich S.D."/>
            <person name="Emmerson P.T."/>
            <person name="Entian K.-D."/>
            <person name="Errington J."/>
            <person name="Fabret C."/>
            <person name="Ferrari E."/>
            <person name="Foulger D."/>
            <person name="Fritz C."/>
            <person name="Fujita M."/>
            <person name="Fujita Y."/>
            <person name="Fuma S."/>
            <person name="Galizzi A."/>
            <person name="Galleron N."/>
            <person name="Ghim S.-Y."/>
            <person name="Glaser P."/>
            <person name="Goffeau A."/>
            <person name="Golightly E.J."/>
            <person name="Grandi G."/>
            <person name="Guiseppi G."/>
            <person name="Guy B.J."/>
            <person name="Haga K."/>
            <person name="Haiech J."/>
            <person name="Harwood C.R."/>
            <person name="Henaut A."/>
            <person name="Hilbert H."/>
            <person name="Holsappel S."/>
            <person name="Hosono S."/>
            <person name="Hullo M.-F."/>
            <person name="Itaya M."/>
            <person name="Jones L.-M."/>
            <person name="Joris B."/>
            <person name="Karamata D."/>
            <person name="Kasahara Y."/>
            <person name="Klaerr-Blanchard M."/>
            <person name="Klein C."/>
            <person name="Kobayashi Y."/>
            <person name="Koetter P."/>
            <person name="Koningstein G."/>
            <person name="Krogh S."/>
            <person name="Kumano M."/>
            <person name="Kurita K."/>
            <person name="Lapidus A."/>
            <person name="Lardinois S."/>
            <person name="Lauber J."/>
            <person name="Lazarevic V."/>
            <person name="Lee S.-M."/>
            <person name="Levine A."/>
            <person name="Liu H."/>
            <person name="Masuda S."/>
            <person name="Mauel C."/>
            <person name="Medigue C."/>
            <person name="Medina N."/>
            <person name="Mellado R.P."/>
            <person name="Mizuno M."/>
            <person name="Moestl D."/>
            <person name="Nakai S."/>
            <person name="Noback M."/>
            <person name="Noone D."/>
            <person name="O'Reilly M."/>
            <person name="Ogawa K."/>
            <person name="Ogiwara A."/>
            <person name="Oudega B."/>
            <person name="Park S.-H."/>
            <person name="Parro V."/>
            <person name="Pohl T.M."/>
            <person name="Portetelle D."/>
            <person name="Porwollik S."/>
            <person name="Prescott A.M."/>
            <person name="Presecan E."/>
            <person name="Pujic P."/>
            <person name="Purnelle B."/>
            <person name="Rapoport G."/>
            <person name="Rey M."/>
            <person name="Reynolds S."/>
            <person name="Rieger M."/>
            <person name="Rivolta C."/>
            <person name="Rocha E."/>
            <person name="Roche B."/>
            <person name="Rose M."/>
            <person name="Sadaie Y."/>
            <person name="Sato T."/>
            <person name="Scanlan E."/>
            <person name="Schleich S."/>
            <person name="Schroeter R."/>
            <person name="Scoffone F."/>
            <person name="Sekiguchi J."/>
            <person name="Sekowska A."/>
            <person name="Seror S.J."/>
            <person name="Serror P."/>
            <person name="Shin B.-S."/>
            <person name="Soldo B."/>
            <person name="Sorokin A."/>
            <person name="Tacconi E."/>
            <person name="Takagi T."/>
            <person name="Takahashi H."/>
            <person name="Takemaru K."/>
            <person name="Takeuchi M."/>
            <person name="Tamakoshi A."/>
            <person name="Tanaka T."/>
            <person name="Terpstra P."/>
            <person name="Tognoni A."/>
            <person name="Tosato V."/>
            <person name="Uchiyama S."/>
            <person name="Vandenbol M."/>
            <person name="Vannier F."/>
            <person name="Vassarotti A."/>
            <person name="Viari A."/>
            <person name="Wambutt R."/>
            <person name="Wedler E."/>
            <person name="Wedler H."/>
            <person name="Weitzenegger T."/>
            <person name="Winters P."/>
            <person name="Wipat A."/>
            <person name="Yamamoto H."/>
            <person name="Yamane K."/>
            <person name="Yasumoto K."/>
            <person name="Yata K."/>
            <person name="Yoshida K."/>
            <person name="Yoshikawa H.-F."/>
            <person name="Zumstein E."/>
            <person name="Yoshikawa H."/>
            <person name="Danchin A."/>
        </authorList>
    </citation>
    <scope>NUCLEOTIDE SEQUENCE [LARGE SCALE GENOMIC DNA]</scope>
    <source>
        <strain>168</strain>
    </source>
</reference>
<reference key="4">
    <citation type="journal article" date="2012" name="J. Bacteriol.">
        <title>Genetic control of osmoadaptive glycine betaine synthesis in Bacillus subtilis through the choline-sensing and glycine betaine-responsive GbsR repressor.</title>
        <authorList>
            <person name="Nau-Wagner G."/>
            <person name="Opper D."/>
            <person name="Rolbetzki A."/>
            <person name="Boch J."/>
            <person name="Kempf B."/>
            <person name="Hoffmann T."/>
            <person name="Bremer E."/>
        </authorList>
    </citation>
    <scope>INDUCTION</scope>
    <source>
        <strain>168 / JH642</strain>
    </source>
</reference>
<gene>
    <name type="primary">opuBB</name>
    <name type="synonym">proW</name>
    <name type="ordered locus">BSU33720</name>
</gene>
<keyword id="KW-0029">Amino-acid transport</keyword>
<keyword id="KW-1003">Cell membrane</keyword>
<keyword id="KW-0472">Membrane</keyword>
<keyword id="KW-1185">Reference proteome</keyword>
<keyword id="KW-0812">Transmembrane</keyword>
<keyword id="KW-1133">Transmembrane helix</keyword>
<keyword id="KW-0813">Transport</keyword>
<name>OPUBB_BACSU</name>
<proteinExistence type="evidence at transcript level"/>
<evidence type="ECO:0000250" key="1"/>
<evidence type="ECO:0000255" key="2">
    <source>
        <dbReference type="PROSITE-ProRule" id="PRU00441"/>
    </source>
</evidence>
<evidence type="ECO:0000269" key="3">
    <source>
    </source>
</evidence>
<evidence type="ECO:0000269" key="4">
    <source>
    </source>
</evidence>
<evidence type="ECO:0000305" key="5"/>
<feature type="chain" id="PRO_0000060154" description="Choline transport system permease protein OpuBB">
    <location>
        <begin position="1"/>
        <end position="217"/>
    </location>
</feature>
<feature type="transmembrane region" description="Helical" evidence="2">
    <location>
        <begin position="23"/>
        <end position="43"/>
    </location>
</feature>
<feature type="transmembrane region" description="Helical" evidence="2">
    <location>
        <begin position="52"/>
        <end position="74"/>
    </location>
</feature>
<feature type="transmembrane region" description="Helical" evidence="2">
    <location>
        <begin position="84"/>
        <end position="101"/>
    </location>
</feature>
<feature type="transmembrane region" description="Helical" evidence="2">
    <location>
        <begin position="128"/>
        <end position="148"/>
    </location>
</feature>
<feature type="transmembrane region" description="Helical" evidence="2">
    <location>
        <begin position="150"/>
        <end position="170"/>
    </location>
</feature>
<feature type="transmembrane region" description="Helical" evidence="2">
    <location>
        <begin position="180"/>
        <end position="200"/>
    </location>
</feature>
<feature type="domain" description="ABC transmembrane type-1" evidence="2">
    <location>
        <begin position="19"/>
        <end position="198"/>
    </location>
</feature>
<feature type="sequence variant" description="In strain: ATCC 6633 / PCI 219.">
    <original>V</original>
    <variation>I</variation>
    <location>
        <position position="5"/>
    </location>
</feature>
<feature type="sequence variant" description="In strain: ATCC 6633 / PCI 219.">
    <original>EL</original>
    <variation>DV</variation>
    <location>
        <begin position="130"/>
        <end position="131"/>
    </location>
</feature>
<feature type="sequence variant" description="In strain: ATCC 6633 / PCI 219.">
    <original>A</original>
    <variation>T</variation>
    <location>
        <position position="201"/>
    </location>
</feature>
<feature type="sequence variant" description="In strain: ATCC 6633 / PCI 219.">
    <original>L</original>
    <variation>V</variation>
    <location>
        <position position="216"/>
    </location>
</feature>
<feature type="sequence conflict" description="In Ref. 1; AAB01533." evidence="5" ref="1">
    <original>LAILAF</original>
    <variation>PDSRHI</variation>
    <location>
        <begin position="67"/>
        <end position="72"/>
    </location>
</feature>
<organism>
    <name type="scientific">Bacillus subtilis (strain 168)</name>
    <dbReference type="NCBI Taxonomy" id="224308"/>
    <lineage>
        <taxon>Bacteria</taxon>
        <taxon>Bacillati</taxon>
        <taxon>Bacillota</taxon>
        <taxon>Bacilli</taxon>
        <taxon>Bacillales</taxon>
        <taxon>Bacillaceae</taxon>
        <taxon>Bacillus</taxon>
    </lineage>
</organism>
<protein>
    <recommendedName>
        <fullName>Choline transport system permease protein OpuBB</fullName>
    </recommendedName>
</protein>
<dbReference type="EMBL" id="U38418">
    <property type="protein sequence ID" value="AAB01533.1"/>
    <property type="molecule type" value="Genomic_DNA"/>
</dbReference>
<dbReference type="EMBL" id="AF008930">
    <property type="protein sequence ID" value="AAC14357.1"/>
    <property type="molecule type" value="Genomic_DNA"/>
</dbReference>
<dbReference type="EMBL" id="AL009126">
    <property type="protein sequence ID" value="CAB15377.1"/>
    <property type="molecule type" value="Genomic_DNA"/>
</dbReference>
<dbReference type="PIR" id="H69669">
    <property type="entry name" value="H69669"/>
</dbReference>
<dbReference type="RefSeq" id="NP_391252.1">
    <property type="nucleotide sequence ID" value="NC_000964.3"/>
</dbReference>
<dbReference type="RefSeq" id="WP_003228370.1">
    <property type="nucleotide sequence ID" value="NZ_OZ025638.1"/>
</dbReference>
<dbReference type="SMR" id="Q45461"/>
<dbReference type="FunCoup" id="Q45461">
    <property type="interactions" value="144"/>
</dbReference>
<dbReference type="STRING" id="224308.BSU33720"/>
<dbReference type="TCDB" id="3.A.1.12.3">
    <property type="family name" value="the atp-binding cassette (abc) superfamily"/>
</dbReference>
<dbReference type="PaxDb" id="224308-BSU33720"/>
<dbReference type="EnsemblBacteria" id="CAB15377">
    <property type="protein sequence ID" value="CAB15377"/>
    <property type="gene ID" value="BSU_33720"/>
</dbReference>
<dbReference type="GeneID" id="936225"/>
<dbReference type="KEGG" id="bsu:BSU33720"/>
<dbReference type="PATRIC" id="fig|224308.179.peg.3657"/>
<dbReference type="eggNOG" id="COG1174">
    <property type="taxonomic scope" value="Bacteria"/>
</dbReference>
<dbReference type="InParanoid" id="Q45461"/>
<dbReference type="OrthoDB" id="9801163at2"/>
<dbReference type="PhylomeDB" id="Q45461"/>
<dbReference type="BioCyc" id="BSUB:BSU33720-MONOMER"/>
<dbReference type="Proteomes" id="UP000001570">
    <property type="component" value="Chromosome"/>
</dbReference>
<dbReference type="GO" id="GO:0005886">
    <property type="term" value="C:plasma membrane"/>
    <property type="evidence" value="ECO:0007669"/>
    <property type="project" value="UniProtKB-SubCell"/>
</dbReference>
<dbReference type="GO" id="GO:0006865">
    <property type="term" value="P:amino acid transport"/>
    <property type="evidence" value="ECO:0007669"/>
    <property type="project" value="UniProtKB-KW"/>
</dbReference>
<dbReference type="GO" id="GO:0031460">
    <property type="term" value="P:glycine betaine transport"/>
    <property type="evidence" value="ECO:0000318"/>
    <property type="project" value="GO_Central"/>
</dbReference>
<dbReference type="GO" id="GO:0055085">
    <property type="term" value="P:transmembrane transport"/>
    <property type="evidence" value="ECO:0007669"/>
    <property type="project" value="InterPro"/>
</dbReference>
<dbReference type="CDD" id="cd06261">
    <property type="entry name" value="TM_PBP2"/>
    <property type="match status" value="1"/>
</dbReference>
<dbReference type="FunFam" id="1.10.3720.10:FF:000001">
    <property type="entry name" value="Glycine betaine ABC transporter, permease"/>
    <property type="match status" value="1"/>
</dbReference>
<dbReference type="Gene3D" id="1.10.3720.10">
    <property type="entry name" value="MetI-like"/>
    <property type="match status" value="1"/>
</dbReference>
<dbReference type="InterPro" id="IPR051204">
    <property type="entry name" value="ABC_transp_perm/SBD"/>
</dbReference>
<dbReference type="InterPro" id="IPR000515">
    <property type="entry name" value="MetI-like"/>
</dbReference>
<dbReference type="InterPro" id="IPR035906">
    <property type="entry name" value="MetI-like_sf"/>
</dbReference>
<dbReference type="PANTHER" id="PTHR30177:SF28">
    <property type="entry name" value="CHOLINE TRANSPORT SYSTEM PERMEASE PROTEIN OPUBB"/>
    <property type="match status" value="1"/>
</dbReference>
<dbReference type="PANTHER" id="PTHR30177">
    <property type="entry name" value="GLYCINE BETAINE/L-PROLINE TRANSPORT SYSTEM PERMEASE PROTEIN PROW"/>
    <property type="match status" value="1"/>
</dbReference>
<dbReference type="Pfam" id="PF00528">
    <property type="entry name" value="BPD_transp_1"/>
    <property type="match status" value="1"/>
</dbReference>
<dbReference type="SUPFAM" id="SSF161098">
    <property type="entry name" value="MetI-like"/>
    <property type="match status" value="1"/>
</dbReference>
<dbReference type="PROSITE" id="PS50928">
    <property type="entry name" value="ABC_TM1"/>
    <property type="match status" value="1"/>
</dbReference>